<sequence>MREAMQLVPMVIEQSSRGERSFDIYSRLLRERIIFLNGEVNDTVSALVCAQLLFLEADPEKPINLYINSPGGAVTSGLAMYDTMRFIRAPVHTLCMGTARSMGSFLLMAGEPGERAALPNASILIHQPSGGFQGQASDMLIHAEEILKTKQRMTRLYAEHCGRSYEDFERGMDRDRFMTAEEALEWGLIERILKVREDTSSL</sequence>
<dbReference type="EC" id="3.4.21.92" evidence="1"/>
<dbReference type="EMBL" id="CP000133">
    <property type="protein sequence ID" value="ABC90217.1"/>
    <property type="molecule type" value="Genomic_DNA"/>
</dbReference>
<dbReference type="RefSeq" id="WP_011424749.1">
    <property type="nucleotide sequence ID" value="NC_007761.1"/>
</dbReference>
<dbReference type="SMR" id="Q2KAB9"/>
<dbReference type="MEROPS" id="S14.001"/>
<dbReference type="KEGG" id="ret:RHE_CH01414"/>
<dbReference type="eggNOG" id="COG0740">
    <property type="taxonomic scope" value="Bacteria"/>
</dbReference>
<dbReference type="HOGENOM" id="CLU_058707_3_2_5"/>
<dbReference type="OrthoDB" id="9802800at2"/>
<dbReference type="Proteomes" id="UP000001936">
    <property type="component" value="Chromosome"/>
</dbReference>
<dbReference type="GO" id="GO:0005737">
    <property type="term" value="C:cytoplasm"/>
    <property type="evidence" value="ECO:0007669"/>
    <property type="project" value="UniProtKB-SubCell"/>
</dbReference>
<dbReference type="GO" id="GO:0009368">
    <property type="term" value="C:endopeptidase Clp complex"/>
    <property type="evidence" value="ECO:0007669"/>
    <property type="project" value="TreeGrafter"/>
</dbReference>
<dbReference type="GO" id="GO:0004176">
    <property type="term" value="F:ATP-dependent peptidase activity"/>
    <property type="evidence" value="ECO:0007669"/>
    <property type="project" value="InterPro"/>
</dbReference>
<dbReference type="GO" id="GO:0051117">
    <property type="term" value="F:ATPase binding"/>
    <property type="evidence" value="ECO:0007669"/>
    <property type="project" value="TreeGrafter"/>
</dbReference>
<dbReference type="GO" id="GO:0004252">
    <property type="term" value="F:serine-type endopeptidase activity"/>
    <property type="evidence" value="ECO:0007669"/>
    <property type="project" value="UniProtKB-UniRule"/>
</dbReference>
<dbReference type="GO" id="GO:0006515">
    <property type="term" value="P:protein quality control for misfolded or incompletely synthesized proteins"/>
    <property type="evidence" value="ECO:0007669"/>
    <property type="project" value="TreeGrafter"/>
</dbReference>
<dbReference type="CDD" id="cd07017">
    <property type="entry name" value="S14_ClpP_2"/>
    <property type="match status" value="1"/>
</dbReference>
<dbReference type="FunFam" id="3.90.226.10:FF:000001">
    <property type="entry name" value="ATP-dependent Clp protease proteolytic subunit"/>
    <property type="match status" value="1"/>
</dbReference>
<dbReference type="Gene3D" id="3.90.226.10">
    <property type="entry name" value="2-enoyl-CoA Hydratase, Chain A, domain 1"/>
    <property type="match status" value="1"/>
</dbReference>
<dbReference type="HAMAP" id="MF_00444">
    <property type="entry name" value="ClpP"/>
    <property type="match status" value="1"/>
</dbReference>
<dbReference type="InterPro" id="IPR001907">
    <property type="entry name" value="ClpP"/>
</dbReference>
<dbReference type="InterPro" id="IPR029045">
    <property type="entry name" value="ClpP/crotonase-like_dom_sf"/>
</dbReference>
<dbReference type="InterPro" id="IPR023562">
    <property type="entry name" value="ClpP/TepA"/>
</dbReference>
<dbReference type="InterPro" id="IPR033135">
    <property type="entry name" value="ClpP_His_AS"/>
</dbReference>
<dbReference type="NCBIfam" id="NF001368">
    <property type="entry name" value="PRK00277.1"/>
    <property type="match status" value="1"/>
</dbReference>
<dbReference type="NCBIfam" id="NF009205">
    <property type="entry name" value="PRK12553.1"/>
    <property type="match status" value="1"/>
</dbReference>
<dbReference type="PANTHER" id="PTHR10381">
    <property type="entry name" value="ATP-DEPENDENT CLP PROTEASE PROTEOLYTIC SUBUNIT"/>
    <property type="match status" value="1"/>
</dbReference>
<dbReference type="PANTHER" id="PTHR10381:SF70">
    <property type="entry name" value="ATP-DEPENDENT CLP PROTEASE PROTEOLYTIC SUBUNIT"/>
    <property type="match status" value="1"/>
</dbReference>
<dbReference type="Pfam" id="PF00574">
    <property type="entry name" value="CLP_protease"/>
    <property type="match status" value="1"/>
</dbReference>
<dbReference type="PRINTS" id="PR00127">
    <property type="entry name" value="CLPPROTEASEP"/>
</dbReference>
<dbReference type="SUPFAM" id="SSF52096">
    <property type="entry name" value="ClpP/crotonase"/>
    <property type="match status" value="1"/>
</dbReference>
<dbReference type="PROSITE" id="PS00382">
    <property type="entry name" value="CLP_PROTEASE_HIS"/>
    <property type="match status" value="1"/>
</dbReference>
<comment type="function">
    <text evidence="1">Cleaves peptides in various proteins in a process that requires ATP hydrolysis. Has a chymotrypsin-like activity. Plays a major role in the degradation of misfolded proteins.</text>
</comment>
<comment type="catalytic activity">
    <reaction evidence="1">
        <text>Hydrolysis of proteins to small peptides in the presence of ATP and magnesium. alpha-casein is the usual test substrate. In the absence of ATP, only oligopeptides shorter than five residues are hydrolyzed (such as succinyl-Leu-Tyr-|-NHMec, and Leu-Tyr-Leu-|-Tyr-Trp, in which cleavage of the -Tyr-|-Leu- and -Tyr-|-Trp bonds also occurs).</text>
        <dbReference type="EC" id="3.4.21.92"/>
    </reaction>
</comment>
<comment type="subunit">
    <text evidence="1">Fourteen ClpP subunits assemble into 2 heptameric rings which stack back to back to give a disk-like structure with a central cavity, resembling the structure of eukaryotic proteasomes.</text>
</comment>
<comment type="subcellular location">
    <subcellularLocation>
        <location evidence="1">Cytoplasm</location>
    </subcellularLocation>
</comment>
<comment type="similarity">
    <text evidence="1">Belongs to the peptidase S14 family.</text>
</comment>
<keyword id="KW-0963">Cytoplasm</keyword>
<keyword id="KW-0378">Hydrolase</keyword>
<keyword id="KW-0645">Protease</keyword>
<keyword id="KW-1185">Reference proteome</keyword>
<keyword id="KW-0720">Serine protease</keyword>
<evidence type="ECO:0000255" key="1">
    <source>
        <dbReference type="HAMAP-Rule" id="MF_00444"/>
    </source>
</evidence>
<gene>
    <name evidence="1" type="primary">clpP1</name>
    <name type="ordered locus">RHE_CH01414</name>
</gene>
<reference key="1">
    <citation type="journal article" date="2006" name="Proc. Natl. Acad. Sci. U.S.A.">
        <title>The partitioned Rhizobium etli genome: genetic and metabolic redundancy in seven interacting replicons.</title>
        <authorList>
            <person name="Gonzalez V."/>
            <person name="Santamaria R.I."/>
            <person name="Bustos P."/>
            <person name="Hernandez-Gonzalez I."/>
            <person name="Medrano-Soto A."/>
            <person name="Moreno-Hagelsieb G."/>
            <person name="Janga S.C."/>
            <person name="Ramirez M.A."/>
            <person name="Jimenez-Jacinto V."/>
            <person name="Collado-Vides J."/>
            <person name="Davila G."/>
        </authorList>
    </citation>
    <scope>NUCLEOTIDE SEQUENCE [LARGE SCALE GENOMIC DNA]</scope>
    <source>
        <strain>ATCC 51251 / DSM 11541 / JCM 21823 / NBRC 15573 / CFN 42</strain>
    </source>
</reference>
<accession>Q2KAB9</accession>
<proteinExistence type="inferred from homology"/>
<name>CLPP1_RHIEC</name>
<organism>
    <name type="scientific">Rhizobium etli (strain ATCC 51251 / DSM 11541 / JCM 21823 / NBRC 15573 / CFN 42)</name>
    <dbReference type="NCBI Taxonomy" id="347834"/>
    <lineage>
        <taxon>Bacteria</taxon>
        <taxon>Pseudomonadati</taxon>
        <taxon>Pseudomonadota</taxon>
        <taxon>Alphaproteobacteria</taxon>
        <taxon>Hyphomicrobiales</taxon>
        <taxon>Rhizobiaceae</taxon>
        <taxon>Rhizobium/Agrobacterium group</taxon>
        <taxon>Rhizobium</taxon>
    </lineage>
</organism>
<feature type="chain" id="PRO_0000252832" description="ATP-dependent Clp protease proteolytic subunit 1">
    <location>
        <begin position="1"/>
        <end position="202"/>
    </location>
</feature>
<feature type="active site" description="Nucleophile" evidence="1">
    <location>
        <position position="101"/>
    </location>
</feature>
<feature type="active site" evidence="1">
    <location>
        <position position="126"/>
    </location>
</feature>
<protein>
    <recommendedName>
        <fullName evidence="1">ATP-dependent Clp protease proteolytic subunit 1</fullName>
        <ecNumber evidence="1">3.4.21.92</ecNumber>
    </recommendedName>
    <alternativeName>
        <fullName evidence="1">Endopeptidase Clp 1</fullName>
    </alternativeName>
</protein>